<evidence type="ECO:0000255" key="1">
    <source>
        <dbReference type="HAMAP-Rule" id="MF_01629"/>
    </source>
</evidence>
<gene>
    <name evidence="1" type="primary">pdxH</name>
    <name type="ordered locus">Shewana3_1626</name>
</gene>
<reference key="1">
    <citation type="submission" date="2006-09" db="EMBL/GenBank/DDBJ databases">
        <title>Complete sequence of chromosome 1 of Shewanella sp. ANA-3.</title>
        <authorList>
            <person name="Copeland A."/>
            <person name="Lucas S."/>
            <person name="Lapidus A."/>
            <person name="Barry K."/>
            <person name="Detter J.C."/>
            <person name="Glavina del Rio T."/>
            <person name="Hammon N."/>
            <person name="Israni S."/>
            <person name="Dalin E."/>
            <person name="Tice H."/>
            <person name="Pitluck S."/>
            <person name="Chertkov O."/>
            <person name="Brettin T."/>
            <person name="Bruce D."/>
            <person name="Han C."/>
            <person name="Tapia R."/>
            <person name="Gilna P."/>
            <person name="Schmutz J."/>
            <person name="Larimer F."/>
            <person name="Land M."/>
            <person name="Hauser L."/>
            <person name="Kyrpides N."/>
            <person name="Kim E."/>
            <person name="Newman D."/>
            <person name="Salticov C."/>
            <person name="Konstantinidis K."/>
            <person name="Klappenback J."/>
            <person name="Tiedje J."/>
            <person name="Richardson P."/>
        </authorList>
    </citation>
    <scope>NUCLEOTIDE SEQUENCE [LARGE SCALE GENOMIC DNA]</scope>
    <source>
        <strain>ANA-3</strain>
    </source>
</reference>
<dbReference type="EC" id="1.4.3.5" evidence="1"/>
<dbReference type="EMBL" id="CP000469">
    <property type="protein sequence ID" value="ABK47859.1"/>
    <property type="molecule type" value="Genomic_DNA"/>
</dbReference>
<dbReference type="RefSeq" id="WP_011716662.1">
    <property type="nucleotide sequence ID" value="NC_008577.1"/>
</dbReference>
<dbReference type="SMR" id="A0KVP0"/>
<dbReference type="STRING" id="94122.Shewana3_1626"/>
<dbReference type="KEGG" id="shn:Shewana3_1626"/>
<dbReference type="eggNOG" id="COG0259">
    <property type="taxonomic scope" value="Bacteria"/>
</dbReference>
<dbReference type="HOGENOM" id="CLU_032263_2_2_6"/>
<dbReference type="OrthoDB" id="9780392at2"/>
<dbReference type="UniPathway" id="UPA01068">
    <property type="reaction ID" value="UER00304"/>
</dbReference>
<dbReference type="UniPathway" id="UPA01068">
    <property type="reaction ID" value="UER00305"/>
</dbReference>
<dbReference type="Proteomes" id="UP000002589">
    <property type="component" value="Chromosome"/>
</dbReference>
<dbReference type="GO" id="GO:0010181">
    <property type="term" value="F:FMN binding"/>
    <property type="evidence" value="ECO:0007669"/>
    <property type="project" value="UniProtKB-UniRule"/>
</dbReference>
<dbReference type="GO" id="GO:0004733">
    <property type="term" value="F:pyridoxamine phosphate oxidase activity"/>
    <property type="evidence" value="ECO:0007669"/>
    <property type="project" value="UniProtKB-UniRule"/>
</dbReference>
<dbReference type="GO" id="GO:0008615">
    <property type="term" value="P:pyridoxine biosynthetic process"/>
    <property type="evidence" value="ECO:0007669"/>
    <property type="project" value="UniProtKB-KW"/>
</dbReference>
<dbReference type="FunFam" id="2.30.110.10:FF:000001">
    <property type="entry name" value="Pyridoxine/pyridoxamine 5'-phosphate oxidase"/>
    <property type="match status" value="1"/>
</dbReference>
<dbReference type="Gene3D" id="2.30.110.10">
    <property type="entry name" value="Electron Transport, Fmn-binding Protein, Chain A"/>
    <property type="match status" value="1"/>
</dbReference>
<dbReference type="HAMAP" id="MF_01629">
    <property type="entry name" value="PdxH"/>
    <property type="match status" value="1"/>
</dbReference>
<dbReference type="InterPro" id="IPR000659">
    <property type="entry name" value="Pyridox_Oxase"/>
</dbReference>
<dbReference type="InterPro" id="IPR019740">
    <property type="entry name" value="Pyridox_Oxase_CS"/>
</dbReference>
<dbReference type="InterPro" id="IPR011576">
    <property type="entry name" value="Pyridox_Oxase_N"/>
</dbReference>
<dbReference type="InterPro" id="IPR019576">
    <property type="entry name" value="Pyridoxamine_oxidase_dimer_C"/>
</dbReference>
<dbReference type="InterPro" id="IPR012349">
    <property type="entry name" value="Split_barrel_FMN-bd"/>
</dbReference>
<dbReference type="NCBIfam" id="TIGR00558">
    <property type="entry name" value="pdxH"/>
    <property type="match status" value="1"/>
</dbReference>
<dbReference type="NCBIfam" id="NF004231">
    <property type="entry name" value="PRK05679.1"/>
    <property type="match status" value="1"/>
</dbReference>
<dbReference type="PANTHER" id="PTHR10851:SF0">
    <property type="entry name" value="PYRIDOXINE-5'-PHOSPHATE OXIDASE"/>
    <property type="match status" value="1"/>
</dbReference>
<dbReference type="PANTHER" id="PTHR10851">
    <property type="entry name" value="PYRIDOXINE-5-PHOSPHATE OXIDASE"/>
    <property type="match status" value="1"/>
</dbReference>
<dbReference type="Pfam" id="PF10590">
    <property type="entry name" value="PNP_phzG_C"/>
    <property type="match status" value="1"/>
</dbReference>
<dbReference type="Pfam" id="PF01243">
    <property type="entry name" value="PNPOx_N"/>
    <property type="match status" value="1"/>
</dbReference>
<dbReference type="PIRSF" id="PIRSF000190">
    <property type="entry name" value="Pyd_amn-ph_oxd"/>
    <property type="match status" value="1"/>
</dbReference>
<dbReference type="SUPFAM" id="SSF50475">
    <property type="entry name" value="FMN-binding split barrel"/>
    <property type="match status" value="1"/>
</dbReference>
<dbReference type="PROSITE" id="PS01064">
    <property type="entry name" value="PYRIDOX_OXIDASE"/>
    <property type="match status" value="1"/>
</dbReference>
<organism>
    <name type="scientific">Shewanella sp. (strain ANA-3)</name>
    <dbReference type="NCBI Taxonomy" id="94122"/>
    <lineage>
        <taxon>Bacteria</taxon>
        <taxon>Pseudomonadati</taxon>
        <taxon>Pseudomonadota</taxon>
        <taxon>Gammaproteobacteria</taxon>
        <taxon>Alteromonadales</taxon>
        <taxon>Shewanellaceae</taxon>
        <taxon>Shewanella</taxon>
    </lineage>
</organism>
<feature type="chain" id="PRO_0000292329" description="Pyridoxine/pyridoxamine 5'-phosphate oxidase">
    <location>
        <begin position="1"/>
        <end position="212"/>
    </location>
</feature>
<feature type="binding site" evidence="1">
    <location>
        <begin position="8"/>
        <end position="11"/>
    </location>
    <ligand>
        <name>substrate</name>
    </ligand>
</feature>
<feature type="binding site" evidence="1">
    <location>
        <begin position="61"/>
        <end position="66"/>
    </location>
    <ligand>
        <name>FMN</name>
        <dbReference type="ChEBI" id="CHEBI:58210"/>
    </ligand>
</feature>
<feature type="binding site" evidence="1">
    <location>
        <position position="66"/>
    </location>
    <ligand>
        <name>substrate</name>
    </ligand>
</feature>
<feature type="binding site" evidence="1">
    <location>
        <begin position="76"/>
        <end position="77"/>
    </location>
    <ligand>
        <name>FMN</name>
        <dbReference type="ChEBI" id="CHEBI:58210"/>
    </ligand>
</feature>
<feature type="binding site" evidence="1">
    <location>
        <position position="82"/>
    </location>
    <ligand>
        <name>FMN</name>
        <dbReference type="ChEBI" id="CHEBI:58210"/>
    </ligand>
</feature>
<feature type="binding site" evidence="1">
    <location>
        <position position="83"/>
    </location>
    <ligand>
        <name>FMN</name>
        <dbReference type="ChEBI" id="CHEBI:58210"/>
    </ligand>
</feature>
<feature type="binding site" evidence="1">
    <location>
        <position position="105"/>
    </location>
    <ligand>
        <name>FMN</name>
        <dbReference type="ChEBI" id="CHEBI:58210"/>
    </ligand>
</feature>
<feature type="binding site" evidence="1">
    <location>
        <position position="123"/>
    </location>
    <ligand>
        <name>substrate</name>
    </ligand>
</feature>
<feature type="binding site" evidence="1">
    <location>
        <position position="127"/>
    </location>
    <ligand>
        <name>substrate</name>
    </ligand>
</feature>
<feature type="binding site" evidence="1">
    <location>
        <position position="131"/>
    </location>
    <ligand>
        <name>substrate</name>
    </ligand>
</feature>
<feature type="binding site" evidence="1">
    <location>
        <begin position="140"/>
        <end position="141"/>
    </location>
    <ligand>
        <name>FMN</name>
        <dbReference type="ChEBI" id="CHEBI:58210"/>
    </ligand>
</feature>
<feature type="binding site" evidence="1">
    <location>
        <position position="185"/>
    </location>
    <ligand>
        <name>FMN</name>
        <dbReference type="ChEBI" id="CHEBI:58210"/>
    </ligand>
</feature>
<feature type="binding site" evidence="1">
    <location>
        <begin position="191"/>
        <end position="193"/>
    </location>
    <ligand>
        <name>substrate</name>
    </ligand>
</feature>
<feature type="binding site" evidence="1">
    <location>
        <position position="195"/>
    </location>
    <ligand>
        <name>FMN</name>
        <dbReference type="ChEBI" id="CHEBI:58210"/>
    </ligand>
</feature>
<proteinExistence type="inferred from homology"/>
<comment type="function">
    <text evidence="1">Catalyzes the oxidation of either pyridoxine 5'-phosphate (PNP) or pyridoxamine 5'-phosphate (PMP) into pyridoxal 5'-phosphate (PLP).</text>
</comment>
<comment type="catalytic activity">
    <reaction evidence="1">
        <text>pyridoxamine 5'-phosphate + O2 + H2O = pyridoxal 5'-phosphate + H2O2 + NH4(+)</text>
        <dbReference type="Rhea" id="RHEA:15817"/>
        <dbReference type="ChEBI" id="CHEBI:15377"/>
        <dbReference type="ChEBI" id="CHEBI:15379"/>
        <dbReference type="ChEBI" id="CHEBI:16240"/>
        <dbReference type="ChEBI" id="CHEBI:28938"/>
        <dbReference type="ChEBI" id="CHEBI:58451"/>
        <dbReference type="ChEBI" id="CHEBI:597326"/>
        <dbReference type="EC" id="1.4.3.5"/>
    </reaction>
</comment>
<comment type="catalytic activity">
    <reaction evidence="1">
        <text>pyridoxine 5'-phosphate + O2 = pyridoxal 5'-phosphate + H2O2</text>
        <dbReference type="Rhea" id="RHEA:15149"/>
        <dbReference type="ChEBI" id="CHEBI:15379"/>
        <dbReference type="ChEBI" id="CHEBI:16240"/>
        <dbReference type="ChEBI" id="CHEBI:58589"/>
        <dbReference type="ChEBI" id="CHEBI:597326"/>
        <dbReference type="EC" id="1.4.3.5"/>
    </reaction>
</comment>
<comment type="cofactor">
    <cofactor evidence="1">
        <name>FMN</name>
        <dbReference type="ChEBI" id="CHEBI:58210"/>
    </cofactor>
    <text evidence="1">Binds 1 FMN per subunit.</text>
</comment>
<comment type="pathway">
    <text evidence="1">Cofactor metabolism; pyridoxal 5'-phosphate salvage; pyridoxal 5'-phosphate from pyridoxamine 5'-phosphate: step 1/1.</text>
</comment>
<comment type="pathway">
    <text evidence="1">Cofactor metabolism; pyridoxal 5'-phosphate salvage; pyridoxal 5'-phosphate from pyridoxine 5'-phosphate: step 1/1.</text>
</comment>
<comment type="subunit">
    <text evidence="1">Homodimer.</text>
</comment>
<comment type="similarity">
    <text evidence="1">Belongs to the pyridoxamine 5'-phosphate oxidase family.</text>
</comment>
<name>PDXH_SHESA</name>
<protein>
    <recommendedName>
        <fullName evidence="1">Pyridoxine/pyridoxamine 5'-phosphate oxidase</fullName>
        <ecNumber evidence="1">1.4.3.5</ecNumber>
    </recommendedName>
    <alternativeName>
        <fullName evidence="1">PNP/PMP oxidase</fullName>
        <shortName evidence="1">PNPOx</shortName>
    </alternativeName>
    <alternativeName>
        <fullName evidence="1">Pyridoxal 5'-phosphate synthase</fullName>
    </alternativeName>
</protein>
<sequence length="212" mass="24422">MTDLSDIRREYTKGGLRRADLPQNPMQLFELWMTQARDAELSDPTAMCVATVDEHGQPYQRIVLLKRFDDTGFVFFTNLGSRKAQQIATNNKVSLHFPWHPIERQVSILGEAQPLSTAEVLKYFMTRPKDSQIAAWVSQQSSKLSARQVLEGKFFEMKAKFAKGDVPLPSFWGGYLVKPSSIEFWQGGEHRLHDRFLYTRQADEWVIDRLAP</sequence>
<keyword id="KW-0285">Flavoprotein</keyword>
<keyword id="KW-0288">FMN</keyword>
<keyword id="KW-0560">Oxidoreductase</keyword>
<keyword id="KW-0664">Pyridoxine biosynthesis</keyword>
<accession>A0KVP0</accession>